<organism>
    <name type="scientific">Levilactobacillus brevis (strain ATCC 367 / BCRC 12310 / CIP 105137 / JCM 1170 / LMG 11437 / NCIMB 947 / NCTC 947)</name>
    <name type="common">Lactobacillus brevis</name>
    <dbReference type="NCBI Taxonomy" id="387344"/>
    <lineage>
        <taxon>Bacteria</taxon>
        <taxon>Bacillati</taxon>
        <taxon>Bacillota</taxon>
        <taxon>Bacilli</taxon>
        <taxon>Lactobacillales</taxon>
        <taxon>Lactobacillaceae</taxon>
        <taxon>Levilactobacillus</taxon>
    </lineage>
</organism>
<reference key="1">
    <citation type="journal article" date="2006" name="Proc. Natl. Acad. Sci. U.S.A.">
        <title>Comparative genomics of the lactic acid bacteria.</title>
        <authorList>
            <person name="Makarova K.S."/>
            <person name="Slesarev A."/>
            <person name="Wolf Y.I."/>
            <person name="Sorokin A."/>
            <person name="Mirkin B."/>
            <person name="Koonin E.V."/>
            <person name="Pavlov A."/>
            <person name="Pavlova N."/>
            <person name="Karamychev V."/>
            <person name="Polouchine N."/>
            <person name="Shakhova V."/>
            <person name="Grigoriev I."/>
            <person name="Lou Y."/>
            <person name="Rohksar D."/>
            <person name="Lucas S."/>
            <person name="Huang K."/>
            <person name="Goodstein D.M."/>
            <person name="Hawkins T."/>
            <person name="Plengvidhya V."/>
            <person name="Welker D."/>
            <person name="Hughes J."/>
            <person name="Goh Y."/>
            <person name="Benson A."/>
            <person name="Baldwin K."/>
            <person name="Lee J.-H."/>
            <person name="Diaz-Muniz I."/>
            <person name="Dosti B."/>
            <person name="Smeianov V."/>
            <person name="Wechter W."/>
            <person name="Barabote R."/>
            <person name="Lorca G."/>
            <person name="Altermann E."/>
            <person name="Barrangou R."/>
            <person name="Ganesan B."/>
            <person name="Xie Y."/>
            <person name="Rawsthorne H."/>
            <person name="Tamir D."/>
            <person name="Parker C."/>
            <person name="Breidt F."/>
            <person name="Broadbent J.R."/>
            <person name="Hutkins R."/>
            <person name="O'Sullivan D."/>
            <person name="Steele J."/>
            <person name="Unlu G."/>
            <person name="Saier M.H. Jr."/>
            <person name="Klaenhammer T."/>
            <person name="Richardson P."/>
            <person name="Kozyavkin S."/>
            <person name="Weimer B.C."/>
            <person name="Mills D.A."/>
        </authorList>
    </citation>
    <scope>NUCLEOTIDE SEQUENCE [LARGE SCALE GENOMIC DNA]</scope>
    <source>
        <strain>ATCC 367 / BCRC 12310 / CIP 105137 / JCM 1170 / LMG 11437 / NCIMB 947 / NCTC 947</strain>
    </source>
</reference>
<comment type="function">
    <text evidence="1">Involved in unsaturated fatty acids biosynthesis. Catalyzes the dehydration of short chain beta-hydroxyacyl-ACPs and long chain saturated and unsaturated beta-hydroxyacyl-ACPs.</text>
</comment>
<comment type="catalytic activity">
    <reaction evidence="1">
        <text>a (3R)-hydroxyacyl-[ACP] = a (2E)-enoyl-[ACP] + H2O</text>
        <dbReference type="Rhea" id="RHEA:13097"/>
        <dbReference type="Rhea" id="RHEA-COMP:9925"/>
        <dbReference type="Rhea" id="RHEA-COMP:9945"/>
        <dbReference type="ChEBI" id="CHEBI:15377"/>
        <dbReference type="ChEBI" id="CHEBI:78784"/>
        <dbReference type="ChEBI" id="CHEBI:78827"/>
        <dbReference type="EC" id="4.2.1.59"/>
    </reaction>
</comment>
<comment type="subcellular location">
    <subcellularLocation>
        <location evidence="1">Cytoplasm</location>
    </subcellularLocation>
</comment>
<comment type="similarity">
    <text evidence="1">Belongs to the thioester dehydratase family. FabZ subfamily.</text>
</comment>
<gene>
    <name evidence="1" type="primary">fabZ</name>
    <name type="ordered locus">LVIS_0937</name>
</gene>
<accession>Q03RV0</accession>
<sequence length="148" mass="16127">MSVLTAAEIMTLIPNRYPILFMDRVDELNPGESITCTKNVTINEEFFQGHFPGNPVMPGVLIIESLAQAASILILKSEQFQGETAYLGAIKQAKFRKVVRPGDVLSLYVEMVKQRSNMGTVKCTASVGEKVACSADLTFIVAAADDKI</sequence>
<name>FABZ_LEVBA</name>
<evidence type="ECO:0000255" key="1">
    <source>
        <dbReference type="HAMAP-Rule" id="MF_00406"/>
    </source>
</evidence>
<dbReference type="EC" id="4.2.1.59" evidence="1"/>
<dbReference type="EMBL" id="CP000416">
    <property type="protein sequence ID" value="ABJ64072.1"/>
    <property type="molecule type" value="Genomic_DNA"/>
</dbReference>
<dbReference type="RefSeq" id="WP_011667662.1">
    <property type="nucleotide sequence ID" value="NC_008497.1"/>
</dbReference>
<dbReference type="SMR" id="Q03RV0"/>
<dbReference type="STRING" id="387344.LVIS_0937"/>
<dbReference type="KEGG" id="lbr:LVIS_0937"/>
<dbReference type="PATRIC" id="fig|387344.15.peg.912"/>
<dbReference type="eggNOG" id="COG0764">
    <property type="taxonomic scope" value="Bacteria"/>
</dbReference>
<dbReference type="HOGENOM" id="CLU_078912_1_1_9"/>
<dbReference type="Proteomes" id="UP000001652">
    <property type="component" value="Chromosome"/>
</dbReference>
<dbReference type="GO" id="GO:0005737">
    <property type="term" value="C:cytoplasm"/>
    <property type="evidence" value="ECO:0007669"/>
    <property type="project" value="UniProtKB-SubCell"/>
</dbReference>
<dbReference type="GO" id="GO:0016020">
    <property type="term" value="C:membrane"/>
    <property type="evidence" value="ECO:0007669"/>
    <property type="project" value="GOC"/>
</dbReference>
<dbReference type="GO" id="GO:0019171">
    <property type="term" value="F:(3R)-hydroxyacyl-[acyl-carrier-protein] dehydratase activity"/>
    <property type="evidence" value="ECO:0007669"/>
    <property type="project" value="UniProtKB-EC"/>
</dbReference>
<dbReference type="GO" id="GO:0006633">
    <property type="term" value="P:fatty acid biosynthetic process"/>
    <property type="evidence" value="ECO:0007669"/>
    <property type="project" value="UniProtKB-UniRule"/>
</dbReference>
<dbReference type="GO" id="GO:0009245">
    <property type="term" value="P:lipid A biosynthetic process"/>
    <property type="evidence" value="ECO:0007669"/>
    <property type="project" value="UniProtKB-UniRule"/>
</dbReference>
<dbReference type="CDD" id="cd01288">
    <property type="entry name" value="FabZ"/>
    <property type="match status" value="1"/>
</dbReference>
<dbReference type="FunFam" id="3.10.129.10:FF:000001">
    <property type="entry name" value="3-hydroxyacyl-[acyl-carrier-protein] dehydratase FabZ"/>
    <property type="match status" value="1"/>
</dbReference>
<dbReference type="Gene3D" id="3.10.129.10">
    <property type="entry name" value="Hotdog Thioesterase"/>
    <property type="match status" value="1"/>
</dbReference>
<dbReference type="HAMAP" id="MF_00406">
    <property type="entry name" value="FabZ"/>
    <property type="match status" value="1"/>
</dbReference>
<dbReference type="InterPro" id="IPR013114">
    <property type="entry name" value="FabA_FabZ"/>
</dbReference>
<dbReference type="InterPro" id="IPR010084">
    <property type="entry name" value="FabZ"/>
</dbReference>
<dbReference type="InterPro" id="IPR029069">
    <property type="entry name" value="HotDog_dom_sf"/>
</dbReference>
<dbReference type="NCBIfam" id="TIGR01750">
    <property type="entry name" value="fabZ"/>
    <property type="match status" value="1"/>
</dbReference>
<dbReference type="NCBIfam" id="NF000582">
    <property type="entry name" value="PRK00006.1"/>
    <property type="match status" value="1"/>
</dbReference>
<dbReference type="PANTHER" id="PTHR30272">
    <property type="entry name" value="3-HYDROXYACYL-[ACYL-CARRIER-PROTEIN] DEHYDRATASE"/>
    <property type="match status" value="1"/>
</dbReference>
<dbReference type="PANTHER" id="PTHR30272:SF1">
    <property type="entry name" value="3-HYDROXYACYL-[ACYL-CARRIER-PROTEIN] DEHYDRATASE"/>
    <property type="match status" value="1"/>
</dbReference>
<dbReference type="Pfam" id="PF07977">
    <property type="entry name" value="FabA"/>
    <property type="match status" value="1"/>
</dbReference>
<dbReference type="SUPFAM" id="SSF54637">
    <property type="entry name" value="Thioesterase/thiol ester dehydrase-isomerase"/>
    <property type="match status" value="1"/>
</dbReference>
<keyword id="KW-0963">Cytoplasm</keyword>
<keyword id="KW-0441">Lipid A biosynthesis</keyword>
<keyword id="KW-0444">Lipid biosynthesis</keyword>
<keyword id="KW-0443">Lipid metabolism</keyword>
<keyword id="KW-0456">Lyase</keyword>
<keyword id="KW-1185">Reference proteome</keyword>
<proteinExistence type="inferred from homology"/>
<feature type="chain" id="PRO_1000123648" description="3-hydroxyacyl-[acyl-carrier-protein] dehydratase FabZ">
    <location>
        <begin position="1"/>
        <end position="148"/>
    </location>
</feature>
<feature type="active site" evidence="1">
    <location>
        <position position="50"/>
    </location>
</feature>
<protein>
    <recommendedName>
        <fullName evidence="1">3-hydroxyacyl-[acyl-carrier-protein] dehydratase FabZ</fullName>
        <ecNumber evidence="1">4.2.1.59</ecNumber>
    </recommendedName>
    <alternativeName>
        <fullName evidence="1">(3R)-hydroxymyristoyl-[acyl-carrier-protein] dehydratase</fullName>
        <shortName evidence="1">(3R)-hydroxymyristoyl-ACP dehydrase</shortName>
    </alternativeName>
    <alternativeName>
        <fullName evidence="1">Beta-hydroxyacyl-ACP dehydratase</fullName>
    </alternativeName>
</protein>